<organism>
    <name type="scientific">Brucella abortus (strain 2308)</name>
    <dbReference type="NCBI Taxonomy" id="359391"/>
    <lineage>
        <taxon>Bacteria</taxon>
        <taxon>Pseudomonadati</taxon>
        <taxon>Pseudomonadota</taxon>
        <taxon>Alphaproteobacteria</taxon>
        <taxon>Hyphomicrobiales</taxon>
        <taxon>Brucellaceae</taxon>
        <taxon>Brucella/Ochrobactrum group</taxon>
        <taxon>Brucella</taxon>
    </lineage>
</organism>
<evidence type="ECO:0000255" key="1">
    <source>
        <dbReference type="HAMAP-Rule" id="MF_00921"/>
    </source>
</evidence>
<proteinExistence type="inferred from homology"/>
<gene>
    <name type="ordered locus">BAB1_2068</name>
</gene>
<protein>
    <recommendedName>
        <fullName evidence="1">Putative pyruvate, phosphate dikinase regulatory protein</fullName>
        <shortName evidence="1">PPDK regulatory protein</shortName>
        <ecNumber evidence="1">2.7.11.32</ecNumber>
        <ecNumber evidence="1">2.7.4.27</ecNumber>
    </recommendedName>
</protein>
<accession>Q2YR06</accession>
<dbReference type="EC" id="2.7.11.32" evidence="1"/>
<dbReference type="EC" id="2.7.4.27" evidence="1"/>
<dbReference type="EMBL" id="AM040264">
    <property type="protein sequence ID" value="CAJ12024.1"/>
    <property type="molecule type" value="Genomic_DNA"/>
</dbReference>
<dbReference type="RefSeq" id="WP_002965131.1">
    <property type="nucleotide sequence ID" value="NZ_KN046823.1"/>
</dbReference>
<dbReference type="SMR" id="Q2YR06"/>
<dbReference type="STRING" id="359391.BAB1_2068"/>
<dbReference type="KEGG" id="bmf:BAB1_2068"/>
<dbReference type="PATRIC" id="fig|359391.11.peg.1301"/>
<dbReference type="HOGENOM" id="CLU_046206_2_0_5"/>
<dbReference type="PhylomeDB" id="Q2YR06"/>
<dbReference type="Proteomes" id="UP000002719">
    <property type="component" value="Chromosome I"/>
</dbReference>
<dbReference type="GO" id="GO:0043531">
    <property type="term" value="F:ADP binding"/>
    <property type="evidence" value="ECO:0007669"/>
    <property type="project" value="UniProtKB-UniRule"/>
</dbReference>
<dbReference type="GO" id="GO:0005524">
    <property type="term" value="F:ATP binding"/>
    <property type="evidence" value="ECO:0007669"/>
    <property type="project" value="InterPro"/>
</dbReference>
<dbReference type="GO" id="GO:0016776">
    <property type="term" value="F:phosphotransferase activity, phosphate group as acceptor"/>
    <property type="evidence" value="ECO:0007669"/>
    <property type="project" value="UniProtKB-UniRule"/>
</dbReference>
<dbReference type="GO" id="GO:0004674">
    <property type="term" value="F:protein serine/threonine kinase activity"/>
    <property type="evidence" value="ECO:0007669"/>
    <property type="project" value="UniProtKB-UniRule"/>
</dbReference>
<dbReference type="HAMAP" id="MF_00921">
    <property type="entry name" value="PDRP"/>
    <property type="match status" value="1"/>
</dbReference>
<dbReference type="InterPro" id="IPR005177">
    <property type="entry name" value="Kinase-pyrophosphorylase"/>
</dbReference>
<dbReference type="InterPro" id="IPR026565">
    <property type="entry name" value="PPDK_reg"/>
</dbReference>
<dbReference type="NCBIfam" id="NF003742">
    <property type="entry name" value="PRK05339.1"/>
    <property type="match status" value="1"/>
</dbReference>
<dbReference type="PANTHER" id="PTHR31756">
    <property type="entry name" value="PYRUVATE, PHOSPHATE DIKINASE REGULATORY PROTEIN 1, CHLOROPLASTIC"/>
    <property type="match status" value="1"/>
</dbReference>
<dbReference type="PANTHER" id="PTHR31756:SF3">
    <property type="entry name" value="PYRUVATE, PHOSPHATE DIKINASE REGULATORY PROTEIN 1, CHLOROPLASTIC"/>
    <property type="match status" value="1"/>
</dbReference>
<dbReference type="Pfam" id="PF03618">
    <property type="entry name" value="Kinase-PPPase"/>
    <property type="match status" value="1"/>
</dbReference>
<feature type="chain" id="PRO_0000316642" description="Putative pyruvate, phosphate dikinase regulatory protein">
    <location>
        <begin position="1"/>
        <end position="279"/>
    </location>
</feature>
<feature type="binding site" evidence="1">
    <location>
        <begin position="153"/>
        <end position="160"/>
    </location>
    <ligand>
        <name>ADP</name>
        <dbReference type="ChEBI" id="CHEBI:456216"/>
    </ligand>
</feature>
<sequence>MTRPLSYFHLHLISDATGETLLAAGRAAAAQYANARAIEHIYPLIRTEKQLRKVLEGIDAEPGIVLYTVVDQKLAAIIDESCADMGVPSVSVLEPVLNTFQSYLGAPAHRRASAQHVLNADYFRRIDALNFMMEHDDGQLPLDIEEADVIIVGISRTSKTPTSIYLANRGIKAANVPLVLGIPVPEILFAAKRPLIVGLVATAERISQIRQNRPLGNIPSLDTGLYTDRVSISEELAYARNLCNRHGWPIIDVSRRSIEETAAAILALLRNGKKEGSSS</sequence>
<reference key="1">
    <citation type="journal article" date="2005" name="Infect. Immun.">
        <title>Whole-genome analyses of speciation events in pathogenic Brucellae.</title>
        <authorList>
            <person name="Chain P.S."/>
            <person name="Comerci D.J."/>
            <person name="Tolmasky M.E."/>
            <person name="Larimer F.W."/>
            <person name="Malfatti S.A."/>
            <person name="Vergez L.M."/>
            <person name="Aguero F."/>
            <person name="Land M.L."/>
            <person name="Ugalde R.A."/>
            <person name="Garcia E."/>
        </authorList>
    </citation>
    <scope>NUCLEOTIDE SEQUENCE [LARGE SCALE GENOMIC DNA]</scope>
    <source>
        <strain>2308</strain>
    </source>
</reference>
<keyword id="KW-0418">Kinase</keyword>
<keyword id="KW-0547">Nucleotide-binding</keyword>
<keyword id="KW-1185">Reference proteome</keyword>
<keyword id="KW-0723">Serine/threonine-protein kinase</keyword>
<keyword id="KW-0808">Transferase</keyword>
<comment type="function">
    <text evidence="1">Bifunctional serine/threonine kinase and phosphorylase involved in the regulation of the pyruvate, phosphate dikinase (PPDK) by catalyzing its phosphorylation/dephosphorylation.</text>
</comment>
<comment type="catalytic activity">
    <reaction evidence="1">
        <text>N(tele)-phospho-L-histidyl/L-threonyl-[pyruvate, phosphate dikinase] + ADP = N(tele)-phospho-L-histidyl/O-phospho-L-threonyl-[pyruvate, phosphate dikinase] + AMP + H(+)</text>
        <dbReference type="Rhea" id="RHEA:43692"/>
        <dbReference type="Rhea" id="RHEA-COMP:10650"/>
        <dbReference type="Rhea" id="RHEA-COMP:10651"/>
        <dbReference type="ChEBI" id="CHEBI:15378"/>
        <dbReference type="ChEBI" id="CHEBI:30013"/>
        <dbReference type="ChEBI" id="CHEBI:61977"/>
        <dbReference type="ChEBI" id="CHEBI:83586"/>
        <dbReference type="ChEBI" id="CHEBI:456215"/>
        <dbReference type="ChEBI" id="CHEBI:456216"/>
        <dbReference type="EC" id="2.7.11.32"/>
    </reaction>
</comment>
<comment type="catalytic activity">
    <reaction evidence="1">
        <text>N(tele)-phospho-L-histidyl/O-phospho-L-threonyl-[pyruvate, phosphate dikinase] + phosphate + H(+) = N(tele)-phospho-L-histidyl/L-threonyl-[pyruvate, phosphate dikinase] + diphosphate</text>
        <dbReference type="Rhea" id="RHEA:43696"/>
        <dbReference type="Rhea" id="RHEA-COMP:10650"/>
        <dbReference type="Rhea" id="RHEA-COMP:10651"/>
        <dbReference type="ChEBI" id="CHEBI:15378"/>
        <dbReference type="ChEBI" id="CHEBI:30013"/>
        <dbReference type="ChEBI" id="CHEBI:33019"/>
        <dbReference type="ChEBI" id="CHEBI:43474"/>
        <dbReference type="ChEBI" id="CHEBI:61977"/>
        <dbReference type="ChEBI" id="CHEBI:83586"/>
        <dbReference type="EC" id="2.7.4.27"/>
    </reaction>
</comment>
<comment type="similarity">
    <text evidence="1">Belongs to the pyruvate, phosphate/water dikinase regulatory protein family. PDRP subfamily.</text>
</comment>
<name>PDRP_BRUA2</name>